<keyword id="KW-0520">NAD</keyword>
<keyword id="KW-0521">NADP</keyword>
<keyword id="KW-0560">Oxidoreductase</keyword>
<keyword id="KW-0662">Pyridine nucleotide biosynthesis</keyword>
<keyword id="KW-1185">Reference proteome</keyword>
<feature type="chain" id="PRO_1000067312" description="L-aspartate dehydrogenase">
    <location>
        <begin position="1"/>
        <end position="266"/>
    </location>
</feature>
<feature type="active site" evidence="1">
    <location>
        <position position="219"/>
    </location>
</feature>
<feature type="binding site" evidence="1">
    <location>
        <position position="123"/>
    </location>
    <ligand>
        <name>NAD(+)</name>
        <dbReference type="ChEBI" id="CHEBI:57540"/>
    </ligand>
</feature>
<feature type="binding site" evidence="1">
    <location>
        <position position="189"/>
    </location>
    <ligand>
        <name>NAD(+)</name>
        <dbReference type="ChEBI" id="CHEBI:57540"/>
    </ligand>
</feature>
<name>ASPD_CUPNH</name>
<protein>
    <recommendedName>
        <fullName evidence="1">L-aspartate dehydrogenase</fullName>
        <ecNumber evidence="1">1.4.1.21</ecNumber>
    </recommendedName>
</protein>
<comment type="function">
    <text evidence="1">Specifically catalyzes the NAD or NADP-dependent dehydrogenation of L-aspartate to iminoaspartate.</text>
</comment>
<comment type="catalytic activity">
    <reaction evidence="1">
        <text>L-aspartate + NADP(+) + H2O = oxaloacetate + NH4(+) + NADPH + H(+)</text>
        <dbReference type="Rhea" id="RHEA:11784"/>
        <dbReference type="ChEBI" id="CHEBI:15377"/>
        <dbReference type="ChEBI" id="CHEBI:15378"/>
        <dbReference type="ChEBI" id="CHEBI:16452"/>
        <dbReference type="ChEBI" id="CHEBI:28938"/>
        <dbReference type="ChEBI" id="CHEBI:29991"/>
        <dbReference type="ChEBI" id="CHEBI:57783"/>
        <dbReference type="ChEBI" id="CHEBI:58349"/>
        <dbReference type="EC" id="1.4.1.21"/>
    </reaction>
</comment>
<comment type="catalytic activity">
    <reaction evidence="1">
        <text>L-aspartate + NAD(+) + H2O = oxaloacetate + NH4(+) + NADH + H(+)</text>
        <dbReference type="Rhea" id="RHEA:11788"/>
        <dbReference type="ChEBI" id="CHEBI:15377"/>
        <dbReference type="ChEBI" id="CHEBI:15378"/>
        <dbReference type="ChEBI" id="CHEBI:16452"/>
        <dbReference type="ChEBI" id="CHEBI:28938"/>
        <dbReference type="ChEBI" id="CHEBI:29991"/>
        <dbReference type="ChEBI" id="CHEBI:57540"/>
        <dbReference type="ChEBI" id="CHEBI:57945"/>
        <dbReference type="EC" id="1.4.1.21"/>
    </reaction>
</comment>
<comment type="pathway">
    <text evidence="1">Cofactor biosynthesis; NAD(+) biosynthesis; iminoaspartate from L-aspartate (dehydrogenase route): step 1/1.</text>
</comment>
<comment type="miscellaneous">
    <text evidence="1">The iminoaspartate product is unstable in aqueous solution and can decompose to oxaloacetate and ammonia.</text>
</comment>
<comment type="similarity">
    <text evidence="1">Belongs to the L-aspartate dehydrogenase family.</text>
</comment>
<reference key="1">
    <citation type="journal article" date="2006" name="Nat. Biotechnol.">
        <title>Genome sequence of the bioplastic-producing 'Knallgas' bacterium Ralstonia eutropha H16.</title>
        <authorList>
            <person name="Pohlmann A."/>
            <person name="Fricke W.F."/>
            <person name="Reinecke F."/>
            <person name="Kusian B."/>
            <person name="Liesegang H."/>
            <person name="Cramm R."/>
            <person name="Eitinger T."/>
            <person name="Ewering C."/>
            <person name="Poetter M."/>
            <person name="Schwartz E."/>
            <person name="Strittmatter A."/>
            <person name="Voss I."/>
            <person name="Gottschalk G."/>
            <person name="Steinbuechel A."/>
            <person name="Friedrich B."/>
            <person name="Bowien B."/>
        </authorList>
    </citation>
    <scope>NUCLEOTIDE SEQUENCE [LARGE SCALE GENOMIC DNA]</scope>
    <source>
        <strain>ATCC 17699 / DSM 428 / KCTC 22496 / NCIMB 10442 / H16 / Stanier 337</strain>
    </source>
</reference>
<proteinExistence type="inferred from homology"/>
<accession>Q0K391</accession>
<dbReference type="EC" id="1.4.1.21" evidence="1"/>
<dbReference type="EMBL" id="AM260480">
    <property type="protein sequence ID" value="CAJ95533.1"/>
    <property type="molecule type" value="Genomic_DNA"/>
</dbReference>
<dbReference type="RefSeq" id="WP_010811682.1">
    <property type="nucleotide sequence ID" value="NZ_CP039288.1"/>
</dbReference>
<dbReference type="SMR" id="Q0K391"/>
<dbReference type="STRING" id="381666.H16_B0736"/>
<dbReference type="KEGG" id="reh:H16_B0736"/>
<dbReference type="eggNOG" id="COG1712">
    <property type="taxonomic scope" value="Bacteria"/>
</dbReference>
<dbReference type="HOGENOM" id="CLU_089550_0_0_4"/>
<dbReference type="OrthoDB" id="7056904at2"/>
<dbReference type="UniPathway" id="UPA00253">
    <property type="reaction ID" value="UER00456"/>
</dbReference>
<dbReference type="Proteomes" id="UP000008210">
    <property type="component" value="Chromosome 2"/>
</dbReference>
<dbReference type="GO" id="GO:0033735">
    <property type="term" value="F:aspartate dehydrogenase activity"/>
    <property type="evidence" value="ECO:0007669"/>
    <property type="project" value="UniProtKB-EC"/>
</dbReference>
<dbReference type="GO" id="GO:0051287">
    <property type="term" value="F:NAD binding"/>
    <property type="evidence" value="ECO:0007669"/>
    <property type="project" value="UniProtKB-UniRule"/>
</dbReference>
<dbReference type="GO" id="GO:0050661">
    <property type="term" value="F:NADP binding"/>
    <property type="evidence" value="ECO:0007669"/>
    <property type="project" value="UniProtKB-UniRule"/>
</dbReference>
<dbReference type="GO" id="GO:0016639">
    <property type="term" value="F:oxidoreductase activity, acting on the CH-NH2 group of donors, NAD or NADP as acceptor"/>
    <property type="evidence" value="ECO:0007669"/>
    <property type="project" value="UniProtKB-UniRule"/>
</dbReference>
<dbReference type="GO" id="GO:0009435">
    <property type="term" value="P:NAD biosynthetic process"/>
    <property type="evidence" value="ECO:0007669"/>
    <property type="project" value="UniProtKB-UniRule"/>
</dbReference>
<dbReference type="Gene3D" id="3.30.360.10">
    <property type="entry name" value="Dihydrodipicolinate Reductase, domain 2"/>
    <property type="match status" value="1"/>
</dbReference>
<dbReference type="Gene3D" id="3.40.50.720">
    <property type="entry name" value="NAD(P)-binding Rossmann-like Domain"/>
    <property type="match status" value="1"/>
</dbReference>
<dbReference type="HAMAP" id="MF_01265">
    <property type="entry name" value="NadX"/>
    <property type="match status" value="1"/>
</dbReference>
<dbReference type="InterPro" id="IPR005106">
    <property type="entry name" value="Asp/hSer_DH_NAD-bd"/>
</dbReference>
<dbReference type="InterPro" id="IPR002811">
    <property type="entry name" value="Asp_DH"/>
</dbReference>
<dbReference type="InterPro" id="IPR020626">
    <property type="entry name" value="Asp_DH_prok"/>
</dbReference>
<dbReference type="InterPro" id="IPR011182">
    <property type="entry name" value="L-Asp_DH"/>
</dbReference>
<dbReference type="InterPro" id="IPR036291">
    <property type="entry name" value="NAD(P)-bd_dom_sf"/>
</dbReference>
<dbReference type="NCBIfam" id="NF009827">
    <property type="entry name" value="PRK13303.1-2"/>
    <property type="match status" value="1"/>
</dbReference>
<dbReference type="NCBIfam" id="NF009828">
    <property type="entry name" value="PRK13303.1-3"/>
    <property type="match status" value="1"/>
</dbReference>
<dbReference type="PANTHER" id="PTHR31873:SF6">
    <property type="entry name" value="ASPARTATE DEHYDROGENASE DOMAIN-CONTAINING PROTEIN"/>
    <property type="match status" value="1"/>
</dbReference>
<dbReference type="PANTHER" id="PTHR31873">
    <property type="entry name" value="L-ASPARTATE DEHYDROGENASE-RELATED"/>
    <property type="match status" value="1"/>
</dbReference>
<dbReference type="Pfam" id="PF01958">
    <property type="entry name" value="Asp_DH_C"/>
    <property type="match status" value="1"/>
</dbReference>
<dbReference type="Pfam" id="PF03447">
    <property type="entry name" value="NAD_binding_3"/>
    <property type="match status" value="1"/>
</dbReference>
<dbReference type="PIRSF" id="PIRSF005227">
    <property type="entry name" value="Asp_dh_NAD_syn"/>
    <property type="match status" value="1"/>
</dbReference>
<dbReference type="SUPFAM" id="SSF55347">
    <property type="entry name" value="Glyceraldehyde-3-phosphate dehydrogenase-like, C-terminal domain"/>
    <property type="match status" value="1"/>
</dbReference>
<dbReference type="SUPFAM" id="SSF51735">
    <property type="entry name" value="NAD(P)-binding Rossmann-fold domains"/>
    <property type="match status" value="1"/>
</dbReference>
<sequence>MLHVSMVGCGAIGRGVMELLKSDPEVVFDVVIVPEHTMDEARDAVTALAPGARVATHLDDQRPDLLVECAGHHALEEHIVPALERGIPCMVVSVGALSEPGMAERLEAAARRGGTQVQLLSGAIGAIDALAAARVGGLDEVIYTGRKPARAWAGTPAEQLFDLDALTEATVIFEGTARDAARLYPKNANVAATVSLAGLGLDRTSVKLLADPHAVENVHHVEARGAFGGFELTMRGKPLAANPKTSALTVFSVVRALGNRAHAVSI</sequence>
<gene>
    <name evidence="1" type="primary">nadX</name>
    <name type="ordered locus">H16_B0736</name>
</gene>
<organism>
    <name type="scientific">Cupriavidus necator (strain ATCC 17699 / DSM 428 / KCTC 22496 / NCIMB 10442 / H16 / Stanier 337)</name>
    <name type="common">Ralstonia eutropha</name>
    <dbReference type="NCBI Taxonomy" id="381666"/>
    <lineage>
        <taxon>Bacteria</taxon>
        <taxon>Pseudomonadati</taxon>
        <taxon>Pseudomonadota</taxon>
        <taxon>Betaproteobacteria</taxon>
        <taxon>Burkholderiales</taxon>
        <taxon>Burkholderiaceae</taxon>
        <taxon>Cupriavidus</taxon>
    </lineage>
</organism>
<evidence type="ECO:0000255" key="1">
    <source>
        <dbReference type="HAMAP-Rule" id="MF_01265"/>
    </source>
</evidence>